<protein>
    <recommendedName>
        <fullName evidence="1">Large ribosomal subunit protein uL10</fullName>
    </recommendedName>
    <alternativeName>
        <fullName evidence="2">50S ribosomal protein L10</fullName>
    </alternativeName>
</protein>
<comment type="function">
    <text evidence="1">Forms part of the ribosomal stalk, playing a central role in the interaction of the ribosome with GTP-bound translation factors.</text>
</comment>
<comment type="subunit">
    <text evidence="1">Part of the ribosomal stalk of the 50S ribosomal subunit. The N-terminus interacts with L11 and the large rRNA to form the base of the stalk. The C-terminus forms an elongated spine to which L12 dimers bind in a sequential fashion forming a multimeric L10(L12)X complex.</text>
</comment>
<comment type="similarity">
    <text evidence="1">Belongs to the universal ribosomal protein uL10 family.</text>
</comment>
<keyword id="KW-0687">Ribonucleoprotein</keyword>
<keyword id="KW-0689">Ribosomal protein</keyword>
<keyword id="KW-0694">RNA-binding</keyword>
<keyword id="KW-0699">rRNA-binding</keyword>
<feature type="chain" id="PRO_1000005577" description="Large ribosomal subunit protein uL10">
    <location>
        <begin position="1"/>
        <end position="186"/>
    </location>
</feature>
<gene>
    <name evidence="1" type="primary">rplJ</name>
    <name type="ordered locus">RHA1_ro01976</name>
</gene>
<reference key="1">
    <citation type="journal article" date="2006" name="Proc. Natl. Acad. Sci. U.S.A.">
        <title>The complete genome of Rhodococcus sp. RHA1 provides insights into a catabolic powerhouse.</title>
        <authorList>
            <person name="McLeod M.P."/>
            <person name="Warren R.L."/>
            <person name="Hsiao W.W.L."/>
            <person name="Araki N."/>
            <person name="Myhre M."/>
            <person name="Fernandes C."/>
            <person name="Miyazawa D."/>
            <person name="Wong W."/>
            <person name="Lillquist A.L."/>
            <person name="Wang D."/>
            <person name="Dosanjh M."/>
            <person name="Hara H."/>
            <person name="Petrescu A."/>
            <person name="Morin R.D."/>
            <person name="Yang G."/>
            <person name="Stott J.M."/>
            <person name="Schein J.E."/>
            <person name="Shin H."/>
            <person name="Smailus D."/>
            <person name="Siddiqui A.S."/>
            <person name="Marra M.A."/>
            <person name="Jones S.J.M."/>
            <person name="Holt R."/>
            <person name="Brinkman F.S.L."/>
            <person name="Miyauchi K."/>
            <person name="Fukuda M."/>
            <person name="Davies J.E."/>
            <person name="Mohn W.W."/>
            <person name="Eltis L.D."/>
        </authorList>
    </citation>
    <scope>NUCLEOTIDE SEQUENCE [LARGE SCALE GENOMIC DNA]</scope>
    <source>
        <strain>RHA1</strain>
    </source>
</reference>
<organism>
    <name type="scientific">Rhodococcus jostii (strain RHA1)</name>
    <dbReference type="NCBI Taxonomy" id="101510"/>
    <lineage>
        <taxon>Bacteria</taxon>
        <taxon>Bacillati</taxon>
        <taxon>Actinomycetota</taxon>
        <taxon>Actinomycetes</taxon>
        <taxon>Mycobacteriales</taxon>
        <taxon>Nocardiaceae</taxon>
        <taxon>Rhodococcus</taxon>
    </lineage>
</organism>
<proteinExistence type="inferred from homology"/>
<sequence>MAKPEKVSAVAEITEQFKGSTAAVITEYRGLTVGNITTLRRALGEGATYSVAKNTLVKRAAAEAGVEGLDDLFVGPTAIAFIKGEPVDAAKALKNFAKDNKALIIKGGYMDGAALSVDEVNKIADLESREILLAKLAGAMKGNLAKAAGLFNAPASQVARLAAALQEKKAAEGGAAEAPAEAAAES</sequence>
<evidence type="ECO:0000255" key="1">
    <source>
        <dbReference type="HAMAP-Rule" id="MF_00362"/>
    </source>
</evidence>
<evidence type="ECO:0000305" key="2"/>
<dbReference type="EMBL" id="CP000431">
    <property type="protein sequence ID" value="ABG93787.1"/>
    <property type="molecule type" value="Genomic_DNA"/>
</dbReference>
<dbReference type="RefSeq" id="WP_005252102.1">
    <property type="nucleotide sequence ID" value="NC_008268.1"/>
</dbReference>
<dbReference type="SMR" id="Q0SF99"/>
<dbReference type="GeneID" id="69893669"/>
<dbReference type="KEGG" id="rha:RHA1_ro01976"/>
<dbReference type="eggNOG" id="COG0244">
    <property type="taxonomic scope" value="Bacteria"/>
</dbReference>
<dbReference type="HOGENOM" id="CLU_092227_1_0_11"/>
<dbReference type="OrthoDB" id="3186107at2"/>
<dbReference type="Proteomes" id="UP000008710">
    <property type="component" value="Chromosome"/>
</dbReference>
<dbReference type="GO" id="GO:0015934">
    <property type="term" value="C:large ribosomal subunit"/>
    <property type="evidence" value="ECO:0007669"/>
    <property type="project" value="InterPro"/>
</dbReference>
<dbReference type="GO" id="GO:0070180">
    <property type="term" value="F:large ribosomal subunit rRNA binding"/>
    <property type="evidence" value="ECO:0007669"/>
    <property type="project" value="UniProtKB-UniRule"/>
</dbReference>
<dbReference type="GO" id="GO:0003735">
    <property type="term" value="F:structural constituent of ribosome"/>
    <property type="evidence" value="ECO:0007669"/>
    <property type="project" value="InterPro"/>
</dbReference>
<dbReference type="GO" id="GO:0006412">
    <property type="term" value="P:translation"/>
    <property type="evidence" value="ECO:0007669"/>
    <property type="project" value="UniProtKB-UniRule"/>
</dbReference>
<dbReference type="CDD" id="cd05797">
    <property type="entry name" value="Ribosomal_L10"/>
    <property type="match status" value="1"/>
</dbReference>
<dbReference type="Gene3D" id="3.30.70.1730">
    <property type="match status" value="1"/>
</dbReference>
<dbReference type="Gene3D" id="6.10.250.290">
    <property type="match status" value="1"/>
</dbReference>
<dbReference type="HAMAP" id="MF_00362">
    <property type="entry name" value="Ribosomal_uL10"/>
    <property type="match status" value="1"/>
</dbReference>
<dbReference type="InterPro" id="IPR001790">
    <property type="entry name" value="Ribosomal_uL10"/>
</dbReference>
<dbReference type="InterPro" id="IPR043141">
    <property type="entry name" value="Ribosomal_uL10-like_sf"/>
</dbReference>
<dbReference type="InterPro" id="IPR022973">
    <property type="entry name" value="Ribosomal_uL10_bac"/>
</dbReference>
<dbReference type="InterPro" id="IPR047865">
    <property type="entry name" value="Ribosomal_uL10_bac_type"/>
</dbReference>
<dbReference type="InterPro" id="IPR002363">
    <property type="entry name" value="Ribosomal_uL10_CS_bac"/>
</dbReference>
<dbReference type="NCBIfam" id="NF000955">
    <property type="entry name" value="PRK00099.1-1"/>
    <property type="match status" value="1"/>
</dbReference>
<dbReference type="PANTHER" id="PTHR11560">
    <property type="entry name" value="39S RIBOSOMAL PROTEIN L10, MITOCHONDRIAL"/>
    <property type="match status" value="1"/>
</dbReference>
<dbReference type="Pfam" id="PF00466">
    <property type="entry name" value="Ribosomal_L10"/>
    <property type="match status" value="1"/>
</dbReference>
<dbReference type="SUPFAM" id="SSF160369">
    <property type="entry name" value="Ribosomal protein L10-like"/>
    <property type="match status" value="1"/>
</dbReference>
<dbReference type="PROSITE" id="PS01109">
    <property type="entry name" value="RIBOSOMAL_L10"/>
    <property type="match status" value="1"/>
</dbReference>
<accession>Q0SF99</accession>
<name>RL10_RHOJR</name>